<protein>
    <recommendedName>
        <fullName evidence="1">NADH-quinone oxidoreductase subunit I</fullName>
        <ecNumber evidence="1">7.1.1.-</ecNumber>
    </recommendedName>
    <alternativeName>
        <fullName evidence="1">NADH dehydrogenase I subunit I</fullName>
    </alternativeName>
    <alternativeName>
        <fullName evidence="1">NDH-1 subunit I</fullName>
    </alternativeName>
</protein>
<reference key="1">
    <citation type="journal article" date="2000" name="Nature">
        <title>Complete DNA sequence of a serogroup A strain of Neisseria meningitidis Z2491.</title>
        <authorList>
            <person name="Parkhill J."/>
            <person name="Achtman M."/>
            <person name="James K.D."/>
            <person name="Bentley S.D."/>
            <person name="Churcher C.M."/>
            <person name="Klee S.R."/>
            <person name="Morelli G."/>
            <person name="Basham D."/>
            <person name="Brown D."/>
            <person name="Chillingworth T."/>
            <person name="Davies R.M."/>
            <person name="Davis P."/>
            <person name="Devlin K."/>
            <person name="Feltwell T."/>
            <person name="Hamlin N."/>
            <person name="Holroyd S."/>
            <person name="Jagels K."/>
            <person name="Leather S."/>
            <person name="Moule S."/>
            <person name="Mungall K.L."/>
            <person name="Quail M.A."/>
            <person name="Rajandream M.A."/>
            <person name="Rutherford K.M."/>
            <person name="Simmonds M."/>
            <person name="Skelton J."/>
            <person name="Whitehead S."/>
            <person name="Spratt B.G."/>
            <person name="Barrell B.G."/>
        </authorList>
    </citation>
    <scope>NUCLEOTIDE SEQUENCE [LARGE SCALE GENOMIC DNA]</scope>
    <source>
        <strain>DSM 15465 / Z2491</strain>
    </source>
</reference>
<gene>
    <name evidence="1" type="primary">nuoI</name>
    <name type="ordered locus">NMA0008</name>
</gene>
<feature type="chain" id="PRO_0000250916" description="NADH-quinone oxidoreductase subunit I">
    <location>
        <begin position="1"/>
        <end position="159"/>
    </location>
</feature>
<feature type="domain" description="4Fe-4S ferredoxin-type 1" evidence="1">
    <location>
        <begin position="50"/>
        <end position="80"/>
    </location>
</feature>
<feature type="domain" description="4Fe-4S ferredoxin-type 2" evidence="1">
    <location>
        <begin position="90"/>
        <end position="119"/>
    </location>
</feature>
<feature type="binding site" evidence="1">
    <location>
        <position position="60"/>
    </location>
    <ligand>
        <name>[4Fe-4S] cluster</name>
        <dbReference type="ChEBI" id="CHEBI:49883"/>
        <label>1</label>
    </ligand>
</feature>
<feature type="binding site" evidence="1">
    <location>
        <position position="63"/>
    </location>
    <ligand>
        <name>[4Fe-4S] cluster</name>
        <dbReference type="ChEBI" id="CHEBI:49883"/>
        <label>1</label>
    </ligand>
</feature>
<feature type="binding site" evidence="1">
    <location>
        <position position="66"/>
    </location>
    <ligand>
        <name>[4Fe-4S] cluster</name>
        <dbReference type="ChEBI" id="CHEBI:49883"/>
        <label>1</label>
    </ligand>
</feature>
<feature type="binding site" evidence="1">
    <location>
        <position position="70"/>
    </location>
    <ligand>
        <name>[4Fe-4S] cluster</name>
        <dbReference type="ChEBI" id="CHEBI:49883"/>
        <label>2</label>
    </ligand>
</feature>
<feature type="binding site" evidence="1">
    <location>
        <position position="99"/>
    </location>
    <ligand>
        <name>[4Fe-4S] cluster</name>
        <dbReference type="ChEBI" id="CHEBI:49883"/>
        <label>2</label>
    </ligand>
</feature>
<feature type="binding site" evidence="1">
    <location>
        <position position="102"/>
    </location>
    <ligand>
        <name>[4Fe-4S] cluster</name>
        <dbReference type="ChEBI" id="CHEBI:49883"/>
        <label>2</label>
    </ligand>
</feature>
<feature type="binding site" evidence="1">
    <location>
        <position position="105"/>
    </location>
    <ligand>
        <name>[4Fe-4S] cluster</name>
        <dbReference type="ChEBI" id="CHEBI:49883"/>
        <label>2</label>
    </ligand>
</feature>
<feature type="binding site" evidence="1">
    <location>
        <position position="109"/>
    </location>
    <ligand>
        <name>[4Fe-4S] cluster</name>
        <dbReference type="ChEBI" id="CHEBI:49883"/>
        <label>1</label>
    </ligand>
</feature>
<evidence type="ECO:0000255" key="1">
    <source>
        <dbReference type="HAMAP-Rule" id="MF_01351"/>
    </source>
</evidence>
<organism>
    <name type="scientific">Neisseria meningitidis serogroup A / serotype 4A (strain DSM 15465 / Z2491)</name>
    <dbReference type="NCBI Taxonomy" id="122587"/>
    <lineage>
        <taxon>Bacteria</taxon>
        <taxon>Pseudomonadati</taxon>
        <taxon>Pseudomonadota</taxon>
        <taxon>Betaproteobacteria</taxon>
        <taxon>Neisseriales</taxon>
        <taxon>Neisseriaceae</taxon>
        <taxon>Neisseria</taxon>
    </lineage>
</organism>
<sequence length="159" mass="18156">MANLVKTFLLGELVKGMGVTLKNFFARKDTIYFPEEKTPQSVRFRGLHAQRRYPNGEERCIACKLCEAVCPAMAINIESEEREDGTRRTKRYDIDLTKCIFCGFCEEACPTDAIVETHIFEYHGEKKGDLHMTKPILLAIGDKYEAEIAKRKAADAPYR</sequence>
<proteinExistence type="inferred from homology"/>
<keyword id="KW-0004">4Fe-4S</keyword>
<keyword id="KW-0997">Cell inner membrane</keyword>
<keyword id="KW-1003">Cell membrane</keyword>
<keyword id="KW-0408">Iron</keyword>
<keyword id="KW-0411">Iron-sulfur</keyword>
<keyword id="KW-0472">Membrane</keyword>
<keyword id="KW-0479">Metal-binding</keyword>
<keyword id="KW-0520">NAD</keyword>
<keyword id="KW-0874">Quinone</keyword>
<keyword id="KW-0677">Repeat</keyword>
<keyword id="KW-1278">Translocase</keyword>
<keyword id="KW-0830">Ubiquinone</keyword>
<accession>Q9JQM2</accession>
<accession>A1INN0</accession>
<dbReference type="EC" id="7.1.1.-" evidence="1"/>
<dbReference type="EMBL" id="AL157959">
    <property type="protein sequence ID" value="CAM07337.1"/>
    <property type="molecule type" value="Genomic_DNA"/>
</dbReference>
<dbReference type="PIR" id="F81219">
    <property type="entry name" value="F81219"/>
</dbReference>
<dbReference type="RefSeq" id="WP_002216341.1">
    <property type="nucleotide sequence ID" value="NC_003116.1"/>
</dbReference>
<dbReference type="SMR" id="Q9JQM2"/>
<dbReference type="EnsemblBacteria" id="CAM07337">
    <property type="protein sequence ID" value="CAM07337"/>
    <property type="gene ID" value="NMA0008"/>
</dbReference>
<dbReference type="GeneID" id="93387338"/>
<dbReference type="KEGG" id="nma:NMA0008"/>
<dbReference type="HOGENOM" id="CLU_067218_5_1_4"/>
<dbReference type="Proteomes" id="UP000000626">
    <property type="component" value="Chromosome"/>
</dbReference>
<dbReference type="GO" id="GO:0005886">
    <property type="term" value="C:plasma membrane"/>
    <property type="evidence" value="ECO:0007669"/>
    <property type="project" value="UniProtKB-SubCell"/>
</dbReference>
<dbReference type="GO" id="GO:0051539">
    <property type="term" value="F:4 iron, 4 sulfur cluster binding"/>
    <property type="evidence" value="ECO:0007669"/>
    <property type="project" value="UniProtKB-KW"/>
</dbReference>
<dbReference type="GO" id="GO:0005506">
    <property type="term" value="F:iron ion binding"/>
    <property type="evidence" value="ECO:0007669"/>
    <property type="project" value="UniProtKB-UniRule"/>
</dbReference>
<dbReference type="GO" id="GO:0050136">
    <property type="term" value="F:NADH:ubiquinone reductase (non-electrogenic) activity"/>
    <property type="evidence" value="ECO:0007669"/>
    <property type="project" value="UniProtKB-UniRule"/>
</dbReference>
<dbReference type="GO" id="GO:0048038">
    <property type="term" value="F:quinone binding"/>
    <property type="evidence" value="ECO:0007669"/>
    <property type="project" value="UniProtKB-KW"/>
</dbReference>
<dbReference type="GO" id="GO:0009060">
    <property type="term" value="P:aerobic respiration"/>
    <property type="evidence" value="ECO:0007669"/>
    <property type="project" value="TreeGrafter"/>
</dbReference>
<dbReference type="FunFam" id="3.30.70.3270:FF:000003">
    <property type="entry name" value="NADH-quinone oxidoreductase subunit I"/>
    <property type="match status" value="1"/>
</dbReference>
<dbReference type="Gene3D" id="3.30.70.3270">
    <property type="match status" value="1"/>
</dbReference>
<dbReference type="HAMAP" id="MF_01351">
    <property type="entry name" value="NDH1_NuoI"/>
    <property type="match status" value="1"/>
</dbReference>
<dbReference type="InterPro" id="IPR017896">
    <property type="entry name" value="4Fe4S_Fe-S-bd"/>
</dbReference>
<dbReference type="InterPro" id="IPR017900">
    <property type="entry name" value="4Fe4S_Fe_S_CS"/>
</dbReference>
<dbReference type="InterPro" id="IPR010226">
    <property type="entry name" value="NADH_quinone_OxRdtase_chainI"/>
</dbReference>
<dbReference type="NCBIfam" id="TIGR01971">
    <property type="entry name" value="NuoI"/>
    <property type="match status" value="1"/>
</dbReference>
<dbReference type="NCBIfam" id="NF004538">
    <property type="entry name" value="PRK05888.1-4"/>
    <property type="match status" value="1"/>
</dbReference>
<dbReference type="NCBIfam" id="NF004539">
    <property type="entry name" value="PRK05888.1-5"/>
    <property type="match status" value="1"/>
</dbReference>
<dbReference type="PANTHER" id="PTHR10849:SF20">
    <property type="entry name" value="NADH DEHYDROGENASE [UBIQUINONE] IRON-SULFUR PROTEIN 8, MITOCHONDRIAL"/>
    <property type="match status" value="1"/>
</dbReference>
<dbReference type="PANTHER" id="PTHR10849">
    <property type="entry name" value="NADH DEHYDROGENASE UBIQUINONE IRON-SULFUR PROTEIN 8, MITOCHONDRIAL"/>
    <property type="match status" value="1"/>
</dbReference>
<dbReference type="Pfam" id="PF12838">
    <property type="entry name" value="Fer4_7"/>
    <property type="match status" value="1"/>
</dbReference>
<dbReference type="SUPFAM" id="SSF54862">
    <property type="entry name" value="4Fe-4S ferredoxins"/>
    <property type="match status" value="1"/>
</dbReference>
<dbReference type="PROSITE" id="PS00198">
    <property type="entry name" value="4FE4S_FER_1"/>
    <property type="match status" value="2"/>
</dbReference>
<dbReference type="PROSITE" id="PS51379">
    <property type="entry name" value="4FE4S_FER_2"/>
    <property type="match status" value="2"/>
</dbReference>
<comment type="function">
    <text evidence="1">NDH-1 shuttles electrons from NADH, via FMN and iron-sulfur (Fe-S) centers, to quinones in the respiratory chain. The immediate electron acceptor for the enzyme in this species is believed to be ubiquinone. Couples the redox reaction to proton translocation (for every two electrons transferred, four hydrogen ions are translocated across the cytoplasmic membrane), and thus conserves the redox energy in a proton gradient.</text>
</comment>
<comment type="catalytic activity">
    <reaction evidence="1">
        <text>a quinone + NADH + 5 H(+)(in) = a quinol + NAD(+) + 4 H(+)(out)</text>
        <dbReference type="Rhea" id="RHEA:57888"/>
        <dbReference type="ChEBI" id="CHEBI:15378"/>
        <dbReference type="ChEBI" id="CHEBI:24646"/>
        <dbReference type="ChEBI" id="CHEBI:57540"/>
        <dbReference type="ChEBI" id="CHEBI:57945"/>
        <dbReference type="ChEBI" id="CHEBI:132124"/>
    </reaction>
</comment>
<comment type="cofactor">
    <cofactor evidence="1">
        <name>[4Fe-4S] cluster</name>
        <dbReference type="ChEBI" id="CHEBI:49883"/>
    </cofactor>
    <text evidence="1">Binds 2 [4Fe-4S] clusters per subunit.</text>
</comment>
<comment type="subunit">
    <text evidence="1">NDH-1 is composed of 14 different subunits. Subunits NuoA, H, J, K, L, M, N constitute the membrane sector of the complex.</text>
</comment>
<comment type="subcellular location">
    <subcellularLocation>
        <location evidence="1">Cell inner membrane</location>
        <topology evidence="1">Peripheral membrane protein</topology>
    </subcellularLocation>
</comment>
<comment type="similarity">
    <text evidence="1">Belongs to the complex I 23 kDa subunit family.</text>
</comment>
<name>NUOI_NEIMA</name>